<accession>B9M197</accession>
<proteinExistence type="inferred from homology"/>
<protein>
    <recommendedName>
        <fullName evidence="1">Sulfate adenylyltransferase subunit 2</fullName>
        <ecNumber evidence="1">2.7.7.4</ecNumber>
    </recommendedName>
    <alternativeName>
        <fullName evidence="1">ATP-sulfurylase small subunit</fullName>
    </alternativeName>
    <alternativeName>
        <fullName evidence="1">Sulfate adenylate transferase</fullName>
        <shortName evidence="1">SAT</shortName>
    </alternativeName>
</protein>
<name>CYSD_GEODF</name>
<feature type="chain" id="PRO_1000117942" description="Sulfate adenylyltransferase subunit 2">
    <location>
        <begin position="1"/>
        <end position="301"/>
    </location>
</feature>
<organism>
    <name type="scientific">Geotalea daltonii (strain DSM 22248 / JCM 15807 / FRC-32)</name>
    <name type="common">Geobacter daltonii</name>
    <dbReference type="NCBI Taxonomy" id="316067"/>
    <lineage>
        <taxon>Bacteria</taxon>
        <taxon>Pseudomonadati</taxon>
        <taxon>Thermodesulfobacteriota</taxon>
        <taxon>Desulfuromonadia</taxon>
        <taxon>Geobacterales</taxon>
        <taxon>Geobacteraceae</taxon>
        <taxon>Geotalea</taxon>
    </lineage>
</organism>
<sequence>MSKTLTHLQQLEAESIHIIREVVAEFANPVMLYSIGKDSAVMLHLARKAFYPAPPPFPLLHVDTTWKFREMIQFRDRMAAECGLDLIVHVNEEGVKNGISPFTHGSALYTDVMKTEGLKQALDKYKFDAAFGGARRDEEKSRAKERIFSFRSANHRWDPKNQRPELWNLYNTRIKPGESIRVFPLSNWTELDVWQYIHLENIPIVPLYYAAVRPVVERDGMLIMVDDDRLELKPGETVQHKSVRFRTLGCYPLTGAVESTADTLPQIIQEMLLTRTSERQGRLIDHDQAGSMEKKKQEGYF</sequence>
<gene>
    <name evidence="1" type="primary">cysD</name>
    <name type="ordered locus">Geob_0805</name>
</gene>
<dbReference type="EC" id="2.7.7.4" evidence="1"/>
<dbReference type="EMBL" id="CP001390">
    <property type="protein sequence ID" value="ACM19167.1"/>
    <property type="molecule type" value="Genomic_DNA"/>
</dbReference>
<dbReference type="RefSeq" id="WP_012645896.1">
    <property type="nucleotide sequence ID" value="NC_011979.1"/>
</dbReference>
<dbReference type="SMR" id="B9M197"/>
<dbReference type="STRING" id="316067.Geob_0805"/>
<dbReference type="KEGG" id="geo:Geob_0805"/>
<dbReference type="eggNOG" id="COG0175">
    <property type="taxonomic scope" value="Bacteria"/>
</dbReference>
<dbReference type="HOGENOM" id="CLU_043026_0_0_7"/>
<dbReference type="OrthoDB" id="9772604at2"/>
<dbReference type="UniPathway" id="UPA00140">
    <property type="reaction ID" value="UER00204"/>
</dbReference>
<dbReference type="Proteomes" id="UP000007721">
    <property type="component" value="Chromosome"/>
</dbReference>
<dbReference type="GO" id="GO:0005524">
    <property type="term" value="F:ATP binding"/>
    <property type="evidence" value="ECO:0007669"/>
    <property type="project" value="UniProtKB-KW"/>
</dbReference>
<dbReference type="GO" id="GO:0004781">
    <property type="term" value="F:sulfate adenylyltransferase (ATP) activity"/>
    <property type="evidence" value="ECO:0007669"/>
    <property type="project" value="UniProtKB-UniRule"/>
</dbReference>
<dbReference type="GO" id="GO:0070814">
    <property type="term" value="P:hydrogen sulfide biosynthetic process"/>
    <property type="evidence" value="ECO:0007669"/>
    <property type="project" value="UniProtKB-UniRule"/>
</dbReference>
<dbReference type="GO" id="GO:0000103">
    <property type="term" value="P:sulfate assimilation"/>
    <property type="evidence" value="ECO:0007669"/>
    <property type="project" value="UniProtKB-UniRule"/>
</dbReference>
<dbReference type="CDD" id="cd23946">
    <property type="entry name" value="Sulfate_adenylyltransferase_2"/>
    <property type="match status" value="1"/>
</dbReference>
<dbReference type="FunFam" id="3.40.50.620:FF:000002">
    <property type="entry name" value="Sulfate adenylyltransferase subunit 2"/>
    <property type="match status" value="1"/>
</dbReference>
<dbReference type="Gene3D" id="3.40.50.620">
    <property type="entry name" value="HUPs"/>
    <property type="match status" value="1"/>
</dbReference>
<dbReference type="HAMAP" id="MF_00064">
    <property type="entry name" value="Sulf_adenylyltr_sub2"/>
    <property type="match status" value="1"/>
</dbReference>
<dbReference type="InterPro" id="IPR002500">
    <property type="entry name" value="PAPS_reduct_dom"/>
</dbReference>
<dbReference type="InterPro" id="IPR014729">
    <property type="entry name" value="Rossmann-like_a/b/a_fold"/>
</dbReference>
<dbReference type="InterPro" id="IPR011784">
    <property type="entry name" value="SO4_adenylTrfase_ssu"/>
</dbReference>
<dbReference type="InterPro" id="IPR050128">
    <property type="entry name" value="Sulfate_adenylyltrnsfr_sub2"/>
</dbReference>
<dbReference type="NCBIfam" id="TIGR02039">
    <property type="entry name" value="CysD"/>
    <property type="match status" value="1"/>
</dbReference>
<dbReference type="NCBIfam" id="NF003587">
    <property type="entry name" value="PRK05253.1"/>
    <property type="match status" value="1"/>
</dbReference>
<dbReference type="NCBIfam" id="NF009214">
    <property type="entry name" value="PRK12563.1"/>
    <property type="match status" value="1"/>
</dbReference>
<dbReference type="PANTHER" id="PTHR43196">
    <property type="entry name" value="SULFATE ADENYLYLTRANSFERASE SUBUNIT 2"/>
    <property type="match status" value="1"/>
</dbReference>
<dbReference type="PANTHER" id="PTHR43196:SF1">
    <property type="entry name" value="SULFATE ADENYLYLTRANSFERASE SUBUNIT 2"/>
    <property type="match status" value="1"/>
</dbReference>
<dbReference type="Pfam" id="PF01507">
    <property type="entry name" value="PAPS_reduct"/>
    <property type="match status" value="1"/>
</dbReference>
<dbReference type="PIRSF" id="PIRSF002936">
    <property type="entry name" value="CysDAde_trans"/>
    <property type="match status" value="1"/>
</dbReference>
<dbReference type="SUPFAM" id="SSF52402">
    <property type="entry name" value="Adenine nucleotide alpha hydrolases-like"/>
    <property type="match status" value="1"/>
</dbReference>
<keyword id="KW-0067">ATP-binding</keyword>
<keyword id="KW-0547">Nucleotide-binding</keyword>
<keyword id="KW-0548">Nucleotidyltransferase</keyword>
<keyword id="KW-1185">Reference proteome</keyword>
<keyword id="KW-0808">Transferase</keyword>
<reference key="1">
    <citation type="submission" date="2009-01" db="EMBL/GenBank/DDBJ databases">
        <title>Complete sequence of Geobacter sp. FRC-32.</title>
        <authorList>
            <consortium name="US DOE Joint Genome Institute"/>
            <person name="Lucas S."/>
            <person name="Copeland A."/>
            <person name="Lapidus A."/>
            <person name="Glavina del Rio T."/>
            <person name="Dalin E."/>
            <person name="Tice H."/>
            <person name="Bruce D."/>
            <person name="Goodwin L."/>
            <person name="Pitluck S."/>
            <person name="Saunders E."/>
            <person name="Brettin T."/>
            <person name="Detter J.C."/>
            <person name="Han C."/>
            <person name="Larimer F."/>
            <person name="Land M."/>
            <person name="Hauser L."/>
            <person name="Kyrpides N."/>
            <person name="Ovchinnikova G."/>
            <person name="Kostka J."/>
            <person name="Richardson P."/>
        </authorList>
    </citation>
    <scope>NUCLEOTIDE SEQUENCE [LARGE SCALE GENOMIC DNA]</scope>
    <source>
        <strain>DSM 22248 / JCM 15807 / FRC-32</strain>
    </source>
</reference>
<comment type="function">
    <text evidence="1">With CysN forms the ATP sulfurylase (ATPS) that catalyzes the adenylation of sulfate producing adenosine 5'-phosphosulfate (APS) and diphosphate, the first enzymatic step in sulfur assimilation pathway. APS synthesis involves the formation of a high-energy phosphoric-sulfuric acid anhydride bond driven by GTP hydrolysis by CysN coupled to ATP hydrolysis by CysD.</text>
</comment>
<comment type="catalytic activity">
    <reaction evidence="1">
        <text>sulfate + ATP + H(+) = adenosine 5'-phosphosulfate + diphosphate</text>
        <dbReference type="Rhea" id="RHEA:18133"/>
        <dbReference type="ChEBI" id="CHEBI:15378"/>
        <dbReference type="ChEBI" id="CHEBI:16189"/>
        <dbReference type="ChEBI" id="CHEBI:30616"/>
        <dbReference type="ChEBI" id="CHEBI:33019"/>
        <dbReference type="ChEBI" id="CHEBI:58243"/>
        <dbReference type="EC" id="2.7.7.4"/>
    </reaction>
</comment>
<comment type="pathway">
    <text evidence="1">Sulfur metabolism; hydrogen sulfide biosynthesis; sulfite from sulfate: step 1/3.</text>
</comment>
<comment type="subunit">
    <text evidence="1">Heterodimer composed of CysD, the smaller subunit, and CysN.</text>
</comment>
<comment type="similarity">
    <text evidence="1">Belongs to the PAPS reductase family. CysD subfamily.</text>
</comment>
<evidence type="ECO:0000255" key="1">
    <source>
        <dbReference type="HAMAP-Rule" id="MF_00064"/>
    </source>
</evidence>